<organism>
    <name type="scientific">Shewanella baltica (strain OS223)</name>
    <dbReference type="NCBI Taxonomy" id="407976"/>
    <lineage>
        <taxon>Bacteria</taxon>
        <taxon>Pseudomonadati</taxon>
        <taxon>Pseudomonadota</taxon>
        <taxon>Gammaproteobacteria</taxon>
        <taxon>Alteromonadales</taxon>
        <taxon>Shewanellaceae</taxon>
        <taxon>Shewanella</taxon>
    </lineage>
</organism>
<protein>
    <recommendedName>
        <fullName evidence="1">GTP cyclohydrolase-2</fullName>
        <ecNumber evidence="1">3.5.4.25</ecNumber>
    </recommendedName>
    <alternativeName>
        <fullName evidence="1">GTP cyclohydrolase II</fullName>
    </alternativeName>
</protein>
<gene>
    <name evidence="1" type="primary">ribA</name>
    <name type="ordered locus">Sbal223_2690</name>
</gene>
<feature type="chain" id="PRO_1000193765" description="GTP cyclohydrolase-2">
    <location>
        <begin position="1"/>
        <end position="204"/>
    </location>
</feature>
<feature type="active site" description="Proton acceptor" evidence="1">
    <location>
        <position position="126"/>
    </location>
</feature>
<feature type="active site" description="Nucleophile" evidence="1">
    <location>
        <position position="128"/>
    </location>
</feature>
<feature type="binding site" evidence="1">
    <location>
        <begin position="49"/>
        <end position="53"/>
    </location>
    <ligand>
        <name>GTP</name>
        <dbReference type="ChEBI" id="CHEBI:37565"/>
    </ligand>
</feature>
<feature type="binding site" evidence="1">
    <location>
        <position position="54"/>
    </location>
    <ligand>
        <name>Zn(2+)</name>
        <dbReference type="ChEBI" id="CHEBI:29105"/>
        <note>catalytic</note>
    </ligand>
</feature>
<feature type="binding site" evidence="1">
    <location>
        <position position="65"/>
    </location>
    <ligand>
        <name>Zn(2+)</name>
        <dbReference type="ChEBI" id="CHEBI:29105"/>
        <note>catalytic</note>
    </ligand>
</feature>
<feature type="binding site" evidence="1">
    <location>
        <position position="67"/>
    </location>
    <ligand>
        <name>Zn(2+)</name>
        <dbReference type="ChEBI" id="CHEBI:29105"/>
        <note>catalytic</note>
    </ligand>
</feature>
<feature type="binding site" evidence="1">
    <location>
        <position position="70"/>
    </location>
    <ligand>
        <name>GTP</name>
        <dbReference type="ChEBI" id="CHEBI:37565"/>
    </ligand>
</feature>
<feature type="binding site" evidence="1">
    <location>
        <begin position="92"/>
        <end position="94"/>
    </location>
    <ligand>
        <name>GTP</name>
        <dbReference type="ChEBI" id="CHEBI:37565"/>
    </ligand>
</feature>
<feature type="binding site" evidence="1">
    <location>
        <position position="114"/>
    </location>
    <ligand>
        <name>GTP</name>
        <dbReference type="ChEBI" id="CHEBI:37565"/>
    </ligand>
</feature>
<feature type="binding site" evidence="1">
    <location>
        <position position="149"/>
    </location>
    <ligand>
        <name>GTP</name>
        <dbReference type="ChEBI" id="CHEBI:37565"/>
    </ligand>
</feature>
<feature type="binding site" evidence="1">
    <location>
        <position position="154"/>
    </location>
    <ligand>
        <name>GTP</name>
        <dbReference type="ChEBI" id="CHEBI:37565"/>
    </ligand>
</feature>
<name>RIBA_SHEB2</name>
<dbReference type="EC" id="3.5.4.25" evidence="1"/>
<dbReference type="EMBL" id="CP001252">
    <property type="protein sequence ID" value="ACK47180.1"/>
    <property type="molecule type" value="Genomic_DNA"/>
</dbReference>
<dbReference type="RefSeq" id="WP_006087423.1">
    <property type="nucleotide sequence ID" value="NC_011663.1"/>
</dbReference>
<dbReference type="SMR" id="B8EF62"/>
<dbReference type="GeneID" id="11771918"/>
<dbReference type="KEGG" id="sbp:Sbal223_2690"/>
<dbReference type="HOGENOM" id="CLU_020273_2_1_6"/>
<dbReference type="UniPathway" id="UPA00275">
    <property type="reaction ID" value="UER00400"/>
</dbReference>
<dbReference type="Proteomes" id="UP000002507">
    <property type="component" value="Chromosome"/>
</dbReference>
<dbReference type="GO" id="GO:0005829">
    <property type="term" value="C:cytosol"/>
    <property type="evidence" value="ECO:0007669"/>
    <property type="project" value="TreeGrafter"/>
</dbReference>
<dbReference type="GO" id="GO:0005525">
    <property type="term" value="F:GTP binding"/>
    <property type="evidence" value="ECO:0007669"/>
    <property type="project" value="UniProtKB-KW"/>
</dbReference>
<dbReference type="GO" id="GO:0003935">
    <property type="term" value="F:GTP cyclohydrolase II activity"/>
    <property type="evidence" value="ECO:0007669"/>
    <property type="project" value="UniProtKB-UniRule"/>
</dbReference>
<dbReference type="GO" id="GO:0008270">
    <property type="term" value="F:zinc ion binding"/>
    <property type="evidence" value="ECO:0007669"/>
    <property type="project" value="UniProtKB-UniRule"/>
</dbReference>
<dbReference type="GO" id="GO:0009231">
    <property type="term" value="P:riboflavin biosynthetic process"/>
    <property type="evidence" value="ECO:0007669"/>
    <property type="project" value="UniProtKB-UniRule"/>
</dbReference>
<dbReference type="CDD" id="cd00641">
    <property type="entry name" value="GTP_cyclohydro2"/>
    <property type="match status" value="1"/>
</dbReference>
<dbReference type="FunFam" id="3.40.50.10990:FF:000002">
    <property type="entry name" value="GTP cyclohydrolase-2"/>
    <property type="match status" value="1"/>
</dbReference>
<dbReference type="Gene3D" id="3.40.50.10990">
    <property type="entry name" value="GTP cyclohydrolase II"/>
    <property type="match status" value="1"/>
</dbReference>
<dbReference type="HAMAP" id="MF_00179">
    <property type="entry name" value="RibA"/>
    <property type="match status" value="1"/>
</dbReference>
<dbReference type="InterPro" id="IPR032677">
    <property type="entry name" value="GTP_cyclohydro_II"/>
</dbReference>
<dbReference type="InterPro" id="IPR000926">
    <property type="entry name" value="RibA"/>
</dbReference>
<dbReference type="InterPro" id="IPR036144">
    <property type="entry name" value="RibA-like_sf"/>
</dbReference>
<dbReference type="NCBIfam" id="NF001591">
    <property type="entry name" value="PRK00393.1"/>
    <property type="match status" value="1"/>
</dbReference>
<dbReference type="NCBIfam" id="TIGR00505">
    <property type="entry name" value="ribA"/>
    <property type="match status" value="1"/>
</dbReference>
<dbReference type="PANTHER" id="PTHR21327:SF18">
    <property type="entry name" value="3,4-DIHYDROXY-2-BUTANONE 4-PHOSPHATE SYNTHASE"/>
    <property type="match status" value="1"/>
</dbReference>
<dbReference type="PANTHER" id="PTHR21327">
    <property type="entry name" value="GTP CYCLOHYDROLASE II-RELATED"/>
    <property type="match status" value="1"/>
</dbReference>
<dbReference type="Pfam" id="PF00925">
    <property type="entry name" value="GTP_cyclohydro2"/>
    <property type="match status" value="1"/>
</dbReference>
<dbReference type="SUPFAM" id="SSF142695">
    <property type="entry name" value="RibA-like"/>
    <property type="match status" value="1"/>
</dbReference>
<accession>B8EF62</accession>
<evidence type="ECO:0000255" key="1">
    <source>
        <dbReference type="HAMAP-Rule" id="MF_00179"/>
    </source>
</evidence>
<sequence length="204" mass="23015">MSIKYVATSKLPTPWGVFAMHGFEDTESGKEHVALTFGTLSADEPVLGRIHSECLTGDALFSLRCDCGFQLQAAMQNIAETGSGFILYLRQEGRGIGLLNKIRAYELQDKGANTVEANEQLGFEADMRKYDMIKPMLEQIGVKHVRLMTNNPRKVKAMKEFGIEVVERVPLQVGKNRYNEAYLKTKSTELGHMMSEYHFMDENK</sequence>
<keyword id="KW-0342">GTP-binding</keyword>
<keyword id="KW-0378">Hydrolase</keyword>
<keyword id="KW-0479">Metal-binding</keyword>
<keyword id="KW-0547">Nucleotide-binding</keyword>
<keyword id="KW-0686">Riboflavin biosynthesis</keyword>
<keyword id="KW-0862">Zinc</keyword>
<reference key="1">
    <citation type="submission" date="2008-12" db="EMBL/GenBank/DDBJ databases">
        <title>Complete sequence of chromosome of Shewanella baltica OS223.</title>
        <authorList>
            <consortium name="US DOE Joint Genome Institute"/>
            <person name="Lucas S."/>
            <person name="Copeland A."/>
            <person name="Lapidus A."/>
            <person name="Glavina del Rio T."/>
            <person name="Dalin E."/>
            <person name="Tice H."/>
            <person name="Bruce D."/>
            <person name="Goodwin L."/>
            <person name="Pitluck S."/>
            <person name="Chertkov O."/>
            <person name="Meincke L."/>
            <person name="Brettin T."/>
            <person name="Detter J.C."/>
            <person name="Han C."/>
            <person name="Kuske C.R."/>
            <person name="Larimer F."/>
            <person name="Land M."/>
            <person name="Hauser L."/>
            <person name="Kyrpides N."/>
            <person name="Ovchinnikova G."/>
            <person name="Brettar I."/>
            <person name="Rodrigues J."/>
            <person name="Konstantinidis K."/>
            <person name="Tiedje J."/>
        </authorList>
    </citation>
    <scope>NUCLEOTIDE SEQUENCE [LARGE SCALE GENOMIC DNA]</scope>
    <source>
        <strain>OS223</strain>
    </source>
</reference>
<proteinExistence type="inferred from homology"/>
<comment type="function">
    <text evidence="1">Catalyzes the conversion of GTP to 2,5-diamino-6-ribosylamino-4(3H)-pyrimidinone 5'-phosphate (DARP), formate and pyrophosphate.</text>
</comment>
<comment type="catalytic activity">
    <reaction evidence="1">
        <text>GTP + 4 H2O = 2,5-diamino-6-hydroxy-4-(5-phosphoribosylamino)-pyrimidine + formate + 2 phosphate + 3 H(+)</text>
        <dbReference type="Rhea" id="RHEA:23704"/>
        <dbReference type="ChEBI" id="CHEBI:15377"/>
        <dbReference type="ChEBI" id="CHEBI:15378"/>
        <dbReference type="ChEBI" id="CHEBI:15740"/>
        <dbReference type="ChEBI" id="CHEBI:37565"/>
        <dbReference type="ChEBI" id="CHEBI:43474"/>
        <dbReference type="ChEBI" id="CHEBI:58614"/>
        <dbReference type="EC" id="3.5.4.25"/>
    </reaction>
</comment>
<comment type="cofactor">
    <cofactor evidence="1">
        <name>Zn(2+)</name>
        <dbReference type="ChEBI" id="CHEBI:29105"/>
    </cofactor>
    <text evidence="1">Binds 1 zinc ion per subunit.</text>
</comment>
<comment type="pathway">
    <text evidence="1">Cofactor biosynthesis; riboflavin biosynthesis; 5-amino-6-(D-ribitylamino)uracil from GTP: step 1/4.</text>
</comment>
<comment type="similarity">
    <text evidence="1">Belongs to the GTP cyclohydrolase II family.</text>
</comment>